<sequence>MTIPHMKYAVSKTSENKVSNTVSPTQDKDAIRKQPDDIINNDEPSHKKIKVAQPDSLRETNTTDPLGHTKAALGEVASMELKPTNDMDPLAVSAASVVSMSNDVLKPETPKGPIIISKNPSNGIFYGPSFTKRESLNARMFLKYYGAHKFLDTYLPEDLNSLYIYYLIKLLGFEVKDQALIGTINSIVHINSQERVQDLGSAISVTNVEDPLAKKQTVRLIKDLQRAINKVLCTRLRLSNFFTIDHFIQKLHTARKILVLTGAGVSTSLGIPDFRSSEGFYSKIKHLGLDDPQDVFNYNIFMHDPSVFYNIANMVLPPEKIYSPLHSFIKMLQMKGKLLRNYTQNIDNLESYAGISTDKLVQCHGSFATATCVTCHWNLPGERIFNKIRNLELPLCPYCYKKRREYFPEGYNNKVGVAASQGSMSERPPYILNSYGVLKPDITFFGEALPNKFHKSIREDILECDLLICIGTSLKVAPVSEIVNMVPSHVPQVLINRDPVKHAEFDLSLLGYCDDIAAMVAQKCGWTIPHKKWNDLKNKNFKCQEKDKGVYVVTSDEHPKTL</sequence>
<name>SIR2_YEAST</name>
<feature type="chain" id="PRO_0000110280" description="NAD-dependent histone deacetylase SIR2">
    <location>
        <begin position="1"/>
        <end position="562"/>
    </location>
</feature>
<feature type="domain" description="Deacetylase sirtuin-type" evidence="2">
    <location>
        <begin position="237"/>
        <end position="527"/>
    </location>
</feature>
<feature type="region of interest" description="Disordered" evidence="3">
    <location>
        <begin position="1"/>
        <end position="67"/>
    </location>
</feature>
<feature type="compositionally biased region" description="Polar residues" evidence="3">
    <location>
        <begin position="11"/>
        <end position="25"/>
    </location>
</feature>
<feature type="compositionally biased region" description="Basic and acidic residues" evidence="3">
    <location>
        <begin position="26"/>
        <end position="36"/>
    </location>
</feature>
<feature type="active site" description="Proton acceptor" evidence="2">
    <location>
        <position position="364"/>
    </location>
</feature>
<feature type="binding site" evidence="18 22">
    <location>
        <begin position="262"/>
        <end position="281"/>
    </location>
    <ligand>
        <name>NAD(+)</name>
        <dbReference type="ChEBI" id="CHEBI:57540"/>
    </ligand>
</feature>
<feature type="binding site" evidence="1">
    <location>
        <begin position="344"/>
        <end position="347"/>
    </location>
    <ligand>
        <name>NAD(+)</name>
        <dbReference type="ChEBI" id="CHEBI:57540"/>
    </ligand>
</feature>
<feature type="binding site" evidence="18 22">
    <location>
        <position position="372"/>
    </location>
    <ligand>
        <name>Zn(2+)</name>
        <dbReference type="ChEBI" id="CHEBI:29105"/>
    </ligand>
</feature>
<feature type="binding site" evidence="18 22">
    <location>
        <position position="375"/>
    </location>
    <ligand>
        <name>Zn(2+)</name>
        <dbReference type="ChEBI" id="CHEBI:29105"/>
    </ligand>
</feature>
<feature type="binding site" evidence="18 22">
    <location>
        <position position="396"/>
    </location>
    <ligand>
        <name>Zn(2+)</name>
        <dbReference type="ChEBI" id="CHEBI:29105"/>
    </ligand>
</feature>
<feature type="binding site" evidence="18 22">
    <location>
        <position position="399"/>
    </location>
    <ligand>
        <name>Zn(2+)</name>
        <dbReference type="ChEBI" id="CHEBI:29105"/>
    </ligand>
</feature>
<feature type="binding site" evidence="18">
    <location>
        <begin position="471"/>
        <end position="473"/>
    </location>
    <ligand>
        <name>NAD(+)</name>
        <dbReference type="ChEBI" id="CHEBI:57540"/>
    </ligand>
</feature>
<feature type="binding site" evidence="18">
    <location>
        <begin position="496"/>
        <end position="498"/>
    </location>
    <ligand>
        <name>NAD(+)</name>
        <dbReference type="ChEBI" id="CHEBI:57540"/>
    </ligand>
</feature>
<feature type="binding site" evidence="18">
    <location>
        <position position="513"/>
    </location>
    <ligand>
        <name>NAD(+)</name>
        <dbReference type="ChEBI" id="CHEBI:57540"/>
    </ligand>
</feature>
<feature type="mutagenesis site" description="Defects in telomeric silencing." evidence="9">
    <original>R</original>
    <variation>K</variation>
    <location>
        <position position="139"/>
    </location>
</feature>
<feature type="mutagenesis site" description="Defects in telomeric silencing." evidence="9">
    <original>G</original>
    <variation>E</variation>
    <location>
        <position position="270"/>
    </location>
</feature>
<feature type="mutagenesis site" description="Defects in telomeric silencing." evidence="9">
    <original>F</original>
    <variation>L</variation>
    <location>
        <position position="296"/>
    </location>
</feature>
<feature type="helix" evidence="27">
    <location>
        <begin position="102"/>
        <end position="105"/>
    </location>
</feature>
<feature type="strand" evidence="27">
    <location>
        <begin position="111"/>
        <end position="113"/>
    </location>
</feature>
<feature type="strand" evidence="27">
    <location>
        <begin position="124"/>
        <end position="126"/>
    </location>
</feature>
<feature type="helix" evidence="27">
    <location>
        <begin position="132"/>
        <end position="154"/>
    </location>
</feature>
<feature type="helix" evidence="27">
    <location>
        <begin position="163"/>
        <end position="170"/>
    </location>
</feature>
<feature type="strand" evidence="27">
    <location>
        <begin position="173"/>
        <end position="175"/>
    </location>
</feature>
<feature type="helix" evidence="27">
    <location>
        <begin position="178"/>
        <end position="187"/>
    </location>
</feature>
<feature type="strand" evidence="26">
    <location>
        <begin position="213"/>
        <end position="217"/>
    </location>
</feature>
<feature type="helix" evidence="26">
    <location>
        <begin position="244"/>
        <end position="253"/>
    </location>
</feature>
<feature type="strand" evidence="26">
    <location>
        <begin position="255"/>
        <end position="261"/>
    </location>
</feature>
<feature type="helix" evidence="26">
    <location>
        <begin position="263"/>
        <end position="269"/>
    </location>
</feature>
<feature type="strand" evidence="26">
    <location>
        <begin position="274"/>
        <end position="276"/>
    </location>
</feature>
<feature type="helix" evidence="26">
    <location>
        <begin position="280"/>
        <end position="283"/>
    </location>
</feature>
<feature type="helix" evidence="26">
    <location>
        <begin position="284"/>
        <end position="287"/>
    </location>
</feature>
<feature type="helix" evidence="26">
    <location>
        <begin position="292"/>
        <end position="296"/>
    </location>
</feature>
<feature type="helix" evidence="26">
    <location>
        <begin position="298"/>
        <end position="303"/>
    </location>
</feature>
<feature type="helix" evidence="26">
    <location>
        <begin position="306"/>
        <end position="311"/>
    </location>
</feature>
<feature type="helix" evidence="26">
    <location>
        <begin position="312"/>
        <end position="315"/>
    </location>
</feature>
<feature type="helix" evidence="26">
    <location>
        <begin position="324"/>
        <end position="334"/>
    </location>
</feature>
<feature type="strand" evidence="26">
    <location>
        <begin position="338"/>
        <end position="343"/>
    </location>
</feature>
<feature type="helix" evidence="26">
    <location>
        <begin position="349"/>
        <end position="352"/>
    </location>
</feature>
<feature type="turn" evidence="26">
    <location>
        <begin position="357"/>
        <end position="359"/>
    </location>
</feature>
<feature type="strand" evidence="26">
    <location>
        <begin position="360"/>
        <end position="362"/>
    </location>
</feature>
<feature type="strand" evidence="26">
    <location>
        <begin position="365"/>
        <end position="372"/>
    </location>
</feature>
<feature type="turn" evidence="26">
    <location>
        <begin position="373"/>
        <end position="375"/>
    </location>
</feature>
<feature type="strand" evidence="26">
    <location>
        <begin position="378"/>
        <end position="380"/>
    </location>
</feature>
<feature type="helix" evidence="26">
    <location>
        <begin position="381"/>
        <end position="384"/>
    </location>
</feature>
<feature type="helix" evidence="26">
    <location>
        <begin position="385"/>
        <end position="389"/>
    </location>
</feature>
<feature type="turn" evidence="26">
    <location>
        <begin position="397"/>
        <end position="399"/>
    </location>
</feature>
<feature type="helix" evidence="26">
    <location>
        <begin position="400"/>
        <end position="406"/>
    </location>
</feature>
<feature type="turn" evidence="27">
    <location>
        <begin position="417"/>
        <end position="420"/>
    </location>
</feature>
<feature type="turn" evidence="26">
    <location>
        <begin position="433"/>
        <end position="436"/>
    </location>
</feature>
<feature type="strand" evidence="26">
    <location>
        <begin position="437"/>
        <end position="442"/>
    </location>
</feature>
<feature type="helix" evidence="26">
    <location>
        <begin position="451"/>
        <end position="460"/>
    </location>
</feature>
<feature type="turn" evidence="26">
    <location>
        <begin position="461"/>
        <end position="463"/>
    </location>
</feature>
<feature type="strand" evidence="26">
    <location>
        <begin position="466"/>
        <end position="471"/>
    </location>
</feature>
<feature type="helix" evidence="26">
    <location>
        <begin position="479"/>
        <end position="481"/>
    </location>
</feature>
<feature type="helix" evidence="26">
    <location>
        <begin position="482"/>
        <end position="485"/>
    </location>
</feature>
<feature type="strand" evidence="26">
    <location>
        <begin position="492"/>
        <end position="498"/>
    </location>
</feature>
<feature type="strand" evidence="26">
    <location>
        <begin position="506"/>
        <end position="511"/>
    </location>
</feature>
<feature type="helix" evidence="26">
    <location>
        <begin position="513"/>
        <end position="524"/>
    </location>
</feature>
<feature type="helix" evidence="26">
    <location>
        <begin position="533"/>
        <end position="537"/>
    </location>
</feature>
<feature type="strand" evidence="26">
    <location>
        <begin position="541"/>
        <end position="547"/>
    </location>
</feature>
<feature type="strand" evidence="26">
    <location>
        <begin position="550"/>
        <end position="555"/>
    </location>
</feature>
<accession>P06700</accession>
<accession>D6VRV4</accession>
<keyword id="KW-0002">3D-structure</keyword>
<keyword id="KW-0156">Chromatin regulator</keyword>
<keyword id="KW-0227">DNA damage</keyword>
<keyword id="KW-0234">DNA repair</keyword>
<keyword id="KW-0479">Metal-binding</keyword>
<keyword id="KW-0520">NAD</keyword>
<keyword id="KW-0539">Nucleus</keyword>
<keyword id="KW-1185">Reference proteome</keyword>
<keyword id="KW-0678">Repressor</keyword>
<keyword id="KW-0804">Transcription</keyword>
<keyword id="KW-0805">Transcription regulation</keyword>
<keyword id="KW-0808">Transferase</keyword>
<keyword id="KW-0862">Zinc</keyword>
<reference key="1">
    <citation type="journal article" date="1984" name="EMBO J.">
        <title>Characterization of two genes required for the position-effect control of yeast mating-type genes.</title>
        <authorList>
            <person name="Shore D."/>
            <person name="Squire M."/>
            <person name="Nasmyth K.A."/>
        </authorList>
    </citation>
    <scope>NUCLEOTIDE SEQUENCE [GENOMIC DNA]</scope>
</reference>
<reference key="2">
    <citation type="journal article" date="1997" name="Yeast">
        <title>The sequence of a 36.7 kb segment on the left arm of chromosome IV from Saccharomyces cerevisiae reveals 20 non-overlapping open reading frames (ORFs) including SIT4, FAD1, NAM1, RNA11, SIR2, NAT1, PRP9, ACT2 and MPS1 and 11 new ORFs.</title>
        <authorList>
            <person name="Saren A.-M."/>
            <person name="Laamanen P."/>
            <person name="Lejarcegui J.B."/>
            <person name="Paulin L."/>
        </authorList>
    </citation>
    <scope>NUCLEOTIDE SEQUENCE [GENOMIC DNA]</scope>
    <source>
        <strain>ATCC 204508 / S288c</strain>
    </source>
</reference>
<reference key="3">
    <citation type="journal article" date="1997" name="Nature">
        <title>The nucleotide sequence of Saccharomyces cerevisiae chromosome IV.</title>
        <authorList>
            <person name="Jacq C."/>
            <person name="Alt-Moerbe J."/>
            <person name="Andre B."/>
            <person name="Arnold W."/>
            <person name="Bahr A."/>
            <person name="Ballesta J.P.G."/>
            <person name="Bargues M."/>
            <person name="Baron L."/>
            <person name="Becker A."/>
            <person name="Biteau N."/>
            <person name="Bloecker H."/>
            <person name="Blugeon C."/>
            <person name="Boskovic J."/>
            <person name="Brandt P."/>
            <person name="Brueckner M."/>
            <person name="Buitrago M.J."/>
            <person name="Coster F."/>
            <person name="Delaveau T."/>
            <person name="del Rey F."/>
            <person name="Dujon B."/>
            <person name="Eide L.G."/>
            <person name="Garcia-Cantalejo J.M."/>
            <person name="Goffeau A."/>
            <person name="Gomez-Peris A."/>
            <person name="Granotier C."/>
            <person name="Hanemann V."/>
            <person name="Hankeln T."/>
            <person name="Hoheisel J.D."/>
            <person name="Jaeger W."/>
            <person name="Jimenez A."/>
            <person name="Jonniaux J.-L."/>
            <person name="Kraemer C."/>
            <person name="Kuester H."/>
            <person name="Laamanen P."/>
            <person name="Legros Y."/>
            <person name="Louis E.J."/>
            <person name="Moeller-Rieker S."/>
            <person name="Monnet A."/>
            <person name="Moro M."/>
            <person name="Mueller-Auer S."/>
            <person name="Nussbaumer B."/>
            <person name="Paricio N."/>
            <person name="Paulin L."/>
            <person name="Perea J."/>
            <person name="Perez-Alonso M."/>
            <person name="Perez-Ortin J.E."/>
            <person name="Pohl T.M."/>
            <person name="Prydz H."/>
            <person name="Purnelle B."/>
            <person name="Rasmussen S.W."/>
            <person name="Remacha M.A."/>
            <person name="Revuelta J.L."/>
            <person name="Rieger M."/>
            <person name="Salom D."/>
            <person name="Saluz H.P."/>
            <person name="Saiz J.E."/>
            <person name="Saren A.-M."/>
            <person name="Schaefer M."/>
            <person name="Scharfe M."/>
            <person name="Schmidt E.R."/>
            <person name="Schneider C."/>
            <person name="Scholler P."/>
            <person name="Schwarz S."/>
            <person name="Soler-Mira A."/>
            <person name="Urrestarazu L.A."/>
            <person name="Verhasselt P."/>
            <person name="Vissers S."/>
            <person name="Voet M."/>
            <person name="Volckaert G."/>
            <person name="Wagner G."/>
            <person name="Wambutt R."/>
            <person name="Wedler E."/>
            <person name="Wedler H."/>
            <person name="Woelfl S."/>
            <person name="Harris D.E."/>
            <person name="Bowman S."/>
            <person name="Brown D."/>
            <person name="Churcher C.M."/>
            <person name="Connor R."/>
            <person name="Dedman K."/>
            <person name="Gentles S."/>
            <person name="Hamlin N."/>
            <person name="Hunt S."/>
            <person name="Jones L."/>
            <person name="McDonald S."/>
            <person name="Murphy L.D."/>
            <person name="Niblett D."/>
            <person name="Odell C."/>
            <person name="Oliver K."/>
            <person name="Rajandream M.A."/>
            <person name="Richards C."/>
            <person name="Shore L."/>
            <person name="Walsh S.V."/>
            <person name="Barrell B.G."/>
            <person name="Dietrich F.S."/>
            <person name="Mulligan J.T."/>
            <person name="Allen E."/>
            <person name="Araujo R."/>
            <person name="Aviles E."/>
            <person name="Berno A."/>
            <person name="Carpenter J."/>
            <person name="Chen E."/>
            <person name="Cherry J.M."/>
            <person name="Chung E."/>
            <person name="Duncan M."/>
            <person name="Hunicke-Smith S."/>
            <person name="Hyman R.W."/>
            <person name="Komp C."/>
            <person name="Lashkari D."/>
            <person name="Lew H."/>
            <person name="Lin D."/>
            <person name="Mosedale D."/>
            <person name="Nakahara K."/>
            <person name="Namath A."/>
            <person name="Oefner P."/>
            <person name="Oh C."/>
            <person name="Petel F.X."/>
            <person name="Roberts D."/>
            <person name="Schramm S."/>
            <person name="Schroeder M."/>
            <person name="Shogren T."/>
            <person name="Shroff N."/>
            <person name="Winant A."/>
            <person name="Yelton M.A."/>
            <person name="Botstein D."/>
            <person name="Davis R.W."/>
            <person name="Johnston M."/>
            <person name="Andrews S."/>
            <person name="Brinkman R."/>
            <person name="Cooper J."/>
            <person name="Ding H."/>
            <person name="Du Z."/>
            <person name="Favello A."/>
            <person name="Fulton L."/>
            <person name="Gattung S."/>
            <person name="Greco T."/>
            <person name="Hallsworth K."/>
            <person name="Hawkins J."/>
            <person name="Hillier L.W."/>
            <person name="Jier M."/>
            <person name="Johnson D."/>
            <person name="Johnston L."/>
            <person name="Kirsten J."/>
            <person name="Kucaba T."/>
            <person name="Langston Y."/>
            <person name="Latreille P."/>
            <person name="Le T."/>
            <person name="Mardis E."/>
            <person name="Menezes S."/>
            <person name="Miller N."/>
            <person name="Nhan M."/>
            <person name="Pauley A."/>
            <person name="Peluso D."/>
            <person name="Rifkin L."/>
            <person name="Riles L."/>
            <person name="Taich A."/>
            <person name="Trevaskis E."/>
            <person name="Vignati D."/>
            <person name="Wilcox L."/>
            <person name="Wohldman P."/>
            <person name="Vaudin M."/>
            <person name="Wilson R."/>
            <person name="Waterston R."/>
            <person name="Albermann K."/>
            <person name="Hani J."/>
            <person name="Heumann K."/>
            <person name="Kleine K."/>
            <person name="Mewes H.-W."/>
            <person name="Zollner A."/>
            <person name="Zaccaria P."/>
        </authorList>
    </citation>
    <scope>NUCLEOTIDE SEQUENCE [LARGE SCALE GENOMIC DNA]</scope>
    <source>
        <strain>ATCC 204508 / S288c</strain>
    </source>
</reference>
<reference key="4">
    <citation type="journal article" date="2014" name="G3 (Bethesda)">
        <title>The reference genome sequence of Saccharomyces cerevisiae: Then and now.</title>
        <authorList>
            <person name="Engel S.R."/>
            <person name="Dietrich F.S."/>
            <person name="Fisk D.G."/>
            <person name="Binkley G."/>
            <person name="Balakrishnan R."/>
            <person name="Costanzo M.C."/>
            <person name="Dwight S.S."/>
            <person name="Hitz B.C."/>
            <person name="Karra K."/>
            <person name="Nash R.S."/>
            <person name="Weng S."/>
            <person name="Wong E.D."/>
            <person name="Lloyd P."/>
            <person name="Skrzypek M.S."/>
            <person name="Miyasato S.R."/>
            <person name="Simison M."/>
            <person name="Cherry J.M."/>
        </authorList>
    </citation>
    <scope>GENOME REANNOTATION</scope>
    <source>
        <strain>ATCC 204508 / S288c</strain>
    </source>
</reference>
<reference key="5">
    <citation type="journal article" date="1997" name="EMBO J.">
        <title>Localization of Sir2p: the nucleolus as a compartment for silent information regulators.</title>
        <authorList>
            <person name="Gotta M."/>
            <person name="Strahl-Bolsinger S."/>
            <person name="Renauld H."/>
            <person name="Laroche T."/>
            <person name="Kennedy B.K."/>
            <person name="Grunstein M."/>
            <person name="Gasser S.M."/>
        </authorList>
    </citation>
    <scope>SUBCELLULAR LOCATION</scope>
</reference>
<reference key="6">
    <citation type="journal article" date="1999" name="Cell">
        <title>An enzymatic activity in the yeast Sir2 protein that is essential for gene silencing.</title>
        <authorList>
            <person name="Tanny J.C."/>
            <person name="Dowd G.J."/>
            <person name="Huang J."/>
            <person name="Hilz H."/>
            <person name="Moazed D."/>
        </authorList>
    </citation>
    <scope>PRELIMINARY FUNCTION</scope>
</reference>
<reference key="7">
    <citation type="journal article" date="2000" name="Nature">
        <title>Transcriptional silencing and longevity protein Sir2 is an NAD-dependent histone deacetylase.</title>
        <authorList>
            <person name="Imai S."/>
            <person name="Armstrong C.M."/>
            <person name="Kaeberlein M."/>
            <person name="Guarente L."/>
        </authorList>
    </citation>
    <scope>FUNCTION</scope>
</reference>
<reference key="8">
    <citation type="journal article" date="1997" name="Nature">
        <title>Silencing factors participate in DNA repair and recombination in Saccharomyces cerevisiae.</title>
        <authorList>
            <person name="Tsukamoto Y."/>
            <person name="Kato J."/>
            <person name="Ikeda H."/>
        </authorList>
    </citation>
    <scope>FUNCTION</scope>
</reference>
<reference key="9">
    <citation type="journal article" date="1997" name="Proc. Natl. Acad. Sci. U.S.A.">
        <title>Silent information regulator protein complexes in Saccharomyces cerevisiae: a SIR2/SIR4 complex and evidence for a regulatory domain in SIR4 that inhibits its interaction with SIR3.</title>
        <authorList>
            <person name="Moazed D."/>
            <person name="Kistler A."/>
            <person name="Axelrod A."/>
            <person name="Rine J."/>
            <person name="Johnson A.D."/>
        </authorList>
    </citation>
    <scope>INTERACTION WITH SIR3 AND SIR4</scope>
</reference>
<reference key="10">
    <citation type="journal article" date="1999" name="Cell">
        <title>Exit from mitosis is triggered by Tem1-dependent release of the protein phosphatase Cdc14 from nucleolar RENT complex.</title>
        <authorList>
            <person name="Shou W."/>
            <person name="Seol J.H."/>
            <person name="Shevchenko A."/>
            <person name="Baskerville C."/>
            <person name="Moazed D."/>
            <person name="Chen Z.W.S."/>
            <person name="Jang J."/>
            <person name="Shevchenko A."/>
            <person name="Charbonneau H."/>
            <person name="Deshaies R.J."/>
        </authorList>
    </citation>
    <scope>IDENTIFICATION IN A RENT COMPLEX WITH CDC14</scope>
</reference>
<reference key="11">
    <citation type="journal article" date="1999" name="Cell">
        <title>Net1, a Sir2-associated nucleolar protein required for rDNA silencing and nucleolar integrity.</title>
        <authorList>
            <person name="Straight A.F."/>
            <person name="Shou W."/>
            <person name="Dowd G.J."/>
            <person name="Turck C.W."/>
            <person name="Deshaies R.J."/>
            <person name="Johnson A.D."/>
            <person name="Moazed D."/>
        </authorList>
    </citation>
    <scope>IDENTIFICATION IN A RENT COMPLEX WITH NET1</scope>
</reference>
<reference key="12">
    <citation type="journal article" date="2000" name="Curr. Biol.">
        <title>Two paralogs involved in transcriptional silencing that antagonistically control yeast life span.</title>
        <authorList>
            <person name="Roy N."/>
            <person name="Runge K.W."/>
        </authorList>
    </citation>
    <scope>INTERACTION WITH ZDS2</scope>
</reference>
<reference key="13">
    <citation type="journal article" date="2001" name="Cell">
        <title>Silenced chromatin is permissive to activator binding and PIC recruitment.</title>
        <authorList>
            <person name="Sekinger E.A."/>
            <person name="Gross D.S."/>
        </authorList>
    </citation>
    <scope>MECHANISM OF TRANSCRIPTION REPRESSION</scope>
</reference>
<reference key="14">
    <citation type="journal article" date="2001" name="Gene">
        <title>The molecular biology of the SIR proteins.</title>
        <authorList>
            <person name="Gasser S.M."/>
            <person name="Cockell M.M."/>
        </authorList>
    </citation>
    <scope>REVIEW</scope>
</reference>
<reference key="15">
    <citation type="journal article" date="2002" name="Genetics">
        <title>Restoration of silencing in Saccharomyces cerevisiae by tethering of a novel Sir2-interacting protein, Esc8.</title>
        <authorList>
            <person name="Cuperus G."/>
            <person name="Shore D."/>
        </authorList>
    </citation>
    <scope>INTERACTION WITH ESC8</scope>
</reference>
<reference key="16">
    <citation type="journal article" date="2002" name="Genetics">
        <title>A unique class of conditional sir2 mutants displays distinct silencing defects in Saccharomyces cerevisiae.</title>
        <authorList>
            <person name="Garcia S.N."/>
            <person name="Pillus L."/>
        </authorList>
    </citation>
    <scope>MUTAGENESIS OF ARG-139; GLY-270 AND PHE-296</scope>
</reference>
<reference key="17">
    <citation type="journal article" date="2003" name="Genes Dev.">
        <title>Association of the RENT complex with nontranscribed and coding regions of rDNA and a regional requirement for the replication fork block protein Fob1 in rDNA silencing.</title>
        <authorList>
            <person name="Huang J."/>
            <person name="Moazed D."/>
        </authorList>
    </citation>
    <scope>FUNCTION</scope>
    <scope>INTERACTION WITH FOB1</scope>
</reference>
<reference key="18">
    <citation type="journal article" date="2003" name="Nature">
        <title>Global analysis of protein expression in yeast.</title>
        <authorList>
            <person name="Ghaemmaghami S."/>
            <person name="Huh W.-K."/>
            <person name="Bower K."/>
            <person name="Howson R.W."/>
            <person name="Belle A."/>
            <person name="Dephoure N."/>
            <person name="O'Shea E.K."/>
            <person name="Weissman J.S."/>
        </authorList>
    </citation>
    <scope>LEVEL OF PROTEIN EXPRESSION [LARGE SCALE ANALYSIS]</scope>
</reference>
<reference key="19">
    <citation type="journal article" date="2003" name="Nature">
        <title>Small molecule activators of sirtuins extend Saccharomyces cerevisiae lifespan.</title>
        <authorList>
            <person name="Howitz K.T."/>
            <person name="Bitterman K.J."/>
            <person name="Cohen H.Y."/>
            <person name="Lamming D.W."/>
            <person name="Lavu S."/>
            <person name="Wood J.G."/>
            <person name="Zipkin R.E."/>
            <person name="Chung P."/>
            <person name="Kisielewski A."/>
            <person name="Zhang L.-L."/>
            <person name="Scherer B."/>
            <person name="Sinclair D.A."/>
        </authorList>
    </citation>
    <scope>ACTIVITY REGULATION</scope>
</reference>
<reference key="20">
    <citation type="journal article" date="2004" name="Biochemistry">
        <title>Substrate specificity and kinetic mechanism of the Sir2 family of NAD+-dependent histone/protein deacetylases.</title>
        <authorList>
            <person name="Borra M.T."/>
            <person name="Langer M.R."/>
            <person name="Slama J.T."/>
            <person name="Denu J.M."/>
        </authorList>
    </citation>
    <scope>FUNCTION</scope>
    <scope>BIOPHYSICOCHEMICAL PROPERTIES</scope>
</reference>
<reference key="21">
    <citation type="journal article" date="2005" name="Mol. Biol. Rep.">
        <title>Dual roles for Mcm10 in DNA replication initiation and silencing at the mating-type loci.</title>
        <authorList>
            <person name="Douglas N.L."/>
            <person name="Dozier S.K."/>
            <person name="Donato J.J."/>
        </authorList>
    </citation>
    <scope>INTERACTION WITH MCM10</scope>
</reference>
<reference key="22">
    <citation type="journal article" date="2007" name="J. Proteome Res.">
        <title>Large-scale phosphorylation analysis of alpha-factor-arrested Saccharomyces cerevisiae.</title>
        <authorList>
            <person name="Li X."/>
            <person name="Gerber S.A."/>
            <person name="Rudner A.D."/>
            <person name="Beausoleil S.A."/>
            <person name="Haas W."/>
            <person name="Villen J."/>
            <person name="Elias J.E."/>
            <person name="Gygi S.P."/>
        </authorList>
    </citation>
    <scope>IDENTIFICATION BY MASS SPECTROMETRY [LARGE SCALE ANALYSIS]</scope>
    <source>
        <strain>ADR376</strain>
    </source>
</reference>
<reference key="23">
    <citation type="journal article" date="2008" name="Mol. Cell. Biol.">
        <title>Slx5 promotes transcriptional silencing and is required for robust growth in the absence of Sir2.</title>
        <authorList>
            <person name="Darst R.P."/>
            <person name="Garcia S.N."/>
            <person name="Koch M.R."/>
            <person name="Pillus L."/>
        </authorList>
    </citation>
    <scope>FUNCTION</scope>
    <scope>INTERACTION WITH SLX5/HEX3</scope>
</reference>
<reference key="24">
    <citation type="journal article" date="2008" name="Mol. Cell. Proteomics">
        <title>A multidimensional chromatography technology for in-depth phosphoproteome analysis.</title>
        <authorList>
            <person name="Albuquerque C.P."/>
            <person name="Smolka M.B."/>
            <person name="Payne S.H."/>
            <person name="Bafna V."/>
            <person name="Eng J."/>
            <person name="Zhou H."/>
        </authorList>
    </citation>
    <scope>IDENTIFICATION BY MASS SPECTROMETRY [LARGE SCALE ANALYSIS]</scope>
</reference>
<reference key="25">
    <citation type="journal article" date="2009" name="Biochemistry">
        <title>Investigating the ADP-ribosyltransferase activity of sirtuins with NAD analogues and 32P-NAD.</title>
        <authorList>
            <person name="Du J."/>
            <person name="Jiang H."/>
            <person name="Lin H."/>
        </authorList>
    </citation>
    <scope>FUNCTION</scope>
</reference>
<reference key="26">
    <citation type="journal article" date="2009" name="Science">
        <title>Global analysis of Cdk1 substrate phosphorylation sites provides insights into evolution.</title>
        <authorList>
            <person name="Holt L.J."/>
            <person name="Tuch B.B."/>
            <person name="Villen J."/>
            <person name="Johnson A.D."/>
            <person name="Gygi S.P."/>
            <person name="Morgan D.O."/>
        </authorList>
    </citation>
    <scope>IDENTIFICATION BY MASS SPECTROMETRY [LARGE SCALE ANALYSIS]</scope>
</reference>
<reference key="27">
    <citation type="journal article" date="2012" name="Nucleic Acids Res.">
        <title>Nsi1 plays a significant role in the silencing of ribosomal DNA in Saccharomyces cerevisiae.</title>
        <authorList>
            <person name="Ha C.W."/>
            <person name="Sung M.K."/>
            <person name="Huh W.K."/>
        </authorList>
    </citation>
    <scope>INTERACTION WITH NSI1</scope>
</reference>
<reference key="28">
    <citation type="submission" date="2006-06" db="PDB data bank">
        <title>Autoregulation of the yeast Sir2 deacetylase by reaction and trapping of a pseudosubstrate motif in the active site.</title>
        <authorList>
            <person name="Hall B.E."/>
            <person name="Buchberger J.R."/>
            <person name="Gerber S.A."/>
            <person name="Ambrosio A.L.B."/>
            <person name="Gygi S.P."/>
            <person name="Filman D."/>
            <person name="Moazed D."/>
            <person name="Ellenberger T."/>
        </authorList>
    </citation>
    <scope>X-RAY CRYSTALLOGRAPHY (1.85 ANGSTROMS) OF 209-562 IN COMPLEX WITH ZINC AND NICOTINAMIDE</scope>
</reference>
<reference key="29">
    <citation type="journal article" date="2013" name="Genes Dev.">
        <title>Structural basis for allosteric stimulation of Sir2 activity by Sir4 binding.</title>
        <authorList>
            <person name="Hsu H.C."/>
            <person name="Wang C.L."/>
            <person name="Wang M."/>
            <person name="Yang N."/>
            <person name="Chen Z."/>
            <person name="Sternglanz R."/>
            <person name="Xu R.M."/>
        </authorList>
    </citation>
    <scope>X-RAY CRYSTALLOGRAPHY (2.90 ANGSTROMS) OF 87-562 IN COMPLEX WITH SIR4; ADP-RIBOSE AND ZINC</scope>
</reference>
<evidence type="ECO:0000250" key="1">
    <source>
        <dbReference type="UniProtKB" id="P53686"/>
    </source>
</evidence>
<evidence type="ECO:0000255" key="2">
    <source>
        <dbReference type="PROSITE-ProRule" id="PRU00236"/>
    </source>
</evidence>
<evidence type="ECO:0000256" key="3">
    <source>
        <dbReference type="SAM" id="MobiDB-lite"/>
    </source>
</evidence>
<evidence type="ECO:0000269" key="4">
    <source>
    </source>
</evidence>
<evidence type="ECO:0000269" key="5">
    <source>
    </source>
</evidence>
<evidence type="ECO:0000269" key="6">
    <source>
    </source>
</evidence>
<evidence type="ECO:0000269" key="7">
    <source>
    </source>
</evidence>
<evidence type="ECO:0000269" key="8">
    <source>
    </source>
</evidence>
<evidence type="ECO:0000269" key="9">
    <source>
    </source>
</evidence>
<evidence type="ECO:0000269" key="10">
    <source>
    </source>
</evidence>
<evidence type="ECO:0000269" key="11">
    <source>
    </source>
</evidence>
<evidence type="ECO:0000269" key="12">
    <source>
    </source>
</evidence>
<evidence type="ECO:0000269" key="13">
    <source>
    </source>
</evidence>
<evidence type="ECO:0000269" key="14">
    <source>
    </source>
</evidence>
<evidence type="ECO:0000269" key="15">
    <source>
    </source>
</evidence>
<evidence type="ECO:0000269" key="16">
    <source>
    </source>
</evidence>
<evidence type="ECO:0000269" key="17">
    <source>
    </source>
</evidence>
<evidence type="ECO:0000269" key="18">
    <source>
    </source>
</evidence>
<evidence type="ECO:0000269" key="19">
    <source>
    </source>
</evidence>
<evidence type="ECO:0000269" key="20">
    <source>
    </source>
</evidence>
<evidence type="ECO:0000269" key="21">
    <source>
    </source>
</evidence>
<evidence type="ECO:0000269" key="22">
    <source ref="28"/>
</evidence>
<evidence type="ECO:0000305" key="23"/>
<evidence type="ECO:0000305" key="24">
    <source>
    </source>
</evidence>
<evidence type="ECO:0000305" key="25">
    <source>
    </source>
</evidence>
<evidence type="ECO:0007829" key="26">
    <source>
        <dbReference type="PDB" id="2HJH"/>
    </source>
</evidence>
<evidence type="ECO:0007829" key="27">
    <source>
        <dbReference type="PDB" id="4IAO"/>
    </source>
</evidence>
<comment type="function">
    <text evidence="7 10 13 15 16 21">NAD-dependent deacetylase, which participates in a wide range of cellular events including chromosome silencing, chromosome segregation, DNA recombination and the determination of life span. Involved in transcriptional repression of the silent mating-type loci HML and HMR and telomeric silencing via its association with SIR3 and SIR4. Plays a central role in ribosomal DNA (rDNA) silencing via its association with the RENT complex, preventing hyperrecombination, and repressing transcription from foreign promoters, which contributes to extending life span. Probably represses transcription via the formation of heterochromatin structure, which involves the compaction of chromatin fiber into a more condensed form, although this complex in at least one case can still bind euchromatic levels of positive transcription regulators. Although it displays some NAD-dependent histone deacetylase activity on histone H3K9Ac and H3K14Ac and histone H4K16Ac in vitro, such activity is unclear in vivo and may not be essential.</text>
</comment>
<comment type="catalytic activity">
    <reaction evidence="2">
        <text>N(6)-acetyl-L-lysyl-[protein] + NAD(+) + H2O = 2''-O-acetyl-ADP-D-ribose + nicotinamide + L-lysyl-[protein]</text>
        <dbReference type="Rhea" id="RHEA:43636"/>
        <dbReference type="Rhea" id="RHEA-COMP:9752"/>
        <dbReference type="Rhea" id="RHEA-COMP:10731"/>
        <dbReference type="ChEBI" id="CHEBI:15377"/>
        <dbReference type="ChEBI" id="CHEBI:17154"/>
        <dbReference type="ChEBI" id="CHEBI:29969"/>
        <dbReference type="ChEBI" id="CHEBI:57540"/>
        <dbReference type="ChEBI" id="CHEBI:61930"/>
        <dbReference type="ChEBI" id="CHEBI:83767"/>
        <dbReference type="EC" id="2.3.1.286"/>
    </reaction>
</comment>
<comment type="cofactor">
    <cofactor evidence="18">
        <name>Zn(2+)</name>
        <dbReference type="ChEBI" id="CHEBI:29105"/>
    </cofactor>
    <text evidence="18">Binds 1 zinc ion per subunit.</text>
</comment>
<comment type="activity regulation">
    <text evidence="11">Its activity is increased by calorie restriction, which slows the pace of aging and increases maximum lifespan. Activated by resveratrol (3,5,4'-trihydroxy-trans-stilbene), which is found in red wine.</text>
</comment>
<comment type="biophysicochemical properties">
    <kinetics>
        <KM evidence="13">29.3 uM for NAD(+)</KM>
        <KM evidence="13">239 uM for a synthetic histone H3K9 acetyllysine peptide</KM>
        <KM evidence="13">420 uM for a synthetic histone H3K14 acetyllysine peptide</KM>
        <KM evidence="13">140 uM for a synthetic histone H4K5 acetyllysine peptide</KM>
        <KM evidence="13">54 uM for a synthetic histone H4K8 acetyllysine peptide</KM>
        <KM evidence="13">105 uM for a synthetic histone H4K12 acetyllysine peptide</KM>
        <KM evidence="13">17 uM for a synthetic histone H4K16 acetyllysine peptide</KM>
    </kinetics>
</comment>
<comment type="subunit">
    <text evidence="4 5 6 8 10 14 15 17 19">Homomultimer. Forms a complex with SIR3 and SIR4 (PubMed:9122169). Component of the RENT complex, at least composed of SIR2, CDC14 and NET1 (PubMed:10219244, PubMed:10219245). The RENT complex interacts with FOB1 (PubMed:12923057). Interacts with ESC8 (PubMed:12399377). Interacts with and ZDS2 (PubMed:10662670). Interacts with MCM10 (PubMed:16328881). Interacts with SLX5 (PubMed:18086879). Interacts with NSI1 (PubMed:22362748).</text>
</comment>
<comment type="interaction">
    <interactant intactId="EBI-17219">
        <id>P06700</id>
    </interactant>
    <interactant intactId="EBI-4192">
        <id>Q00684</id>
        <label>CDC14</label>
    </interactant>
    <organismsDiffer>false</organismsDiffer>
    <experiments>6</experiments>
</comment>
<comment type="interaction">
    <interactant intactId="EBI-17219">
        <id>P06700</id>
    </interactant>
    <interactant intactId="EBI-7327">
        <id>P22146</id>
        <label>GAS1</label>
    </interactant>
    <organismsDiffer>false</organismsDiffer>
    <experiments>2</experiments>
</comment>
<comment type="interaction">
    <interactant intactId="EBI-17219">
        <id>P06700</id>
    </interactant>
    <interactant intactId="EBI-17237">
        <id>P11978</id>
        <label>SIR4</label>
    </interactant>
    <organismsDiffer>false</organismsDiffer>
    <experiments>8</experiments>
</comment>
<comment type="subcellular location">
    <subcellularLocation>
        <location evidence="20">Nucleus</location>
        <location evidence="20">Nucleolus</location>
    </subcellularLocation>
    <text>Associated with nucleolar chromatin. Preferentially bound to the spacer regions of the rDNA repeats through its interaction with NET1.</text>
</comment>
<comment type="miscellaneous">
    <text>Its stability is directly linked to life span, which is extended when it is present in high dosage. Conversely, its absence shortens life span.</text>
</comment>
<comment type="miscellaneous">
    <text evidence="25">The reported ADP-ribosyltransferase activity of sirtuins is likely some inefficient side reaction of the deacetylase activity and may not be physiologically relevant.</text>
</comment>
<comment type="miscellaneous">
    <text evidence="12">Present with 3350 molecules/cell in log phase SD medium.</text>
</comment>
<comment type="similarity">
    <text evidence="23">Belongs to the sirtuin family. Class I subfamily.</text>
</comment>
<comment type="caution">
    <text evidence="24">Was originally thought to be an ADP-ribosyltransferase.</text>
</comment>
<comment type="online information" name="Protein Spotlight">
    <link uri="https://www.proteinspotlight.org/back_issues/040"/>
    <text>In vino vita? - Issue 40 of November 2003</text>
</comment>
<organism>
    <name type="scientific">Saccharomyces cerevisiae (strain ATCC 204508 / S288c)</name>
    <name type="common">Baker's yeast</name>
    <dbReference type="NCBI Taxonomy" id="559292"/>
    <lineage>
        <taxon>Eukaryota</taxon>
        <taxon>Fungi</taxon>
        <taxon>Dikarya</taxon>
        <taxon>Ascomycota</taxon>
        <taxon>Saccharomycotina</taxon>
        <taxon>Saccharomycetes</taxon>
        <taxon>Saccharomycetales</taxon>
        <taxon>Saccharomycetaceae</taxon>
        <taxon>Saccharomyces</taxon>
    </lineage>
</organism>
<protein>
    <recommendedName>
        <fullName>NAD-dependent histone deacetylase SIR2</fullName>
        <ecNumber evidence="2">2.3.1.286</ecNumber>
    </recommendedName>
    <alternativeName>
        <fullName>Regulatory protein SIR2</fullName>
    </alternativeName>
    <alternativeName>
        <fullName>Silent information regulator 2</fullName>
    </alternativeName>
</protein>
<gene>
    <name type="primary">SIR2</name>
    <name type="synonym">MAR1</name>
    <name type="ordered locus">YDL042C</name>
    <name type="ORF">D2714</name>
</gene>
<dbReference type="EC" id="2.3.1.286" evidence="2"/>
<dbReference type="EMBL" id="X01419">
    <property type="protein sequence ID" value="CAA25667.1"/>
    <property type="molecule type" value="Genomic_DNA"/>
</dbReference>
<dbReference type="EMBL" id="Z71781">
    <property type="protein sequence ID" value="CAA96447.1"/>
    <property type="molecule type" value="Genomic_DNA"/>
</dbReference>
<dbReference type="EMBL" id="Z74090">
    <property type="protein sequence ID" value="CAA98600.1"/>
    <property type="molecule type" value="Genomic_DNA"/>
</dbReference>
<dbReference type="EMBL" id="BK006938">
    <property type="protein sequence ID" value="DAA11814.1"/>
    <property type="molecule type" value="Genomic_DNA"/>
</dbReference>
<dbReference type="PIR" id="S05891">
    <property type="entry name" value="RGBYS2"/>
</dbReference>
<dbReference type="RefSeq" id="NP_010242.1">
    <property type="nucleotide sequence ID" value="NM_001180101.1"/>
</dbReference>
<dbReference type="PDB" id="2HJH">
    <property type="method" value="X-ray"/>
    <property type="resolution" value="1.85 A"/>
    <property type="chains" value="A/B=209-562"/>
</dbReference>
<dbReference type="PDB" id="4IAO">
    <property type="method" value="X-ray"/>
    <property type="resolution" value="2.90 A"/>
    <property type="chains" value="A/B=87-562"/>
</dbReference>
<dbReference type="PDBsum" id="2HJH"/>
<dbReference type="PDBsum" id="4IAO"/>
<dbReference type="SMR" id="P06700"/>
<dbReference type="BioGRID" id="32017">
    <property type="interactions" value="405"/>
</dbReference>
<dbReference type="ComplexPortal" id="CPX-1669">
    <property type="entry name" value="RENT complex"/>
</dbReference>
<dbReference type="ComplexPortal" id="CPX-1811">
    <property type="entry name" value="Sir2-3-4 silent chromatin complex"/>
</dbReference>
<dbReference type="DIP" id="DIP-596N"/>
<dbReference type="FunCoup" id="P06700">
    <property type="interactions" value="232"/>
</dbReference>
<dbReference type="IntAct" id="P06700">
    <property type="interactions" value="56"/>
</dbReference>
<dbReference type="MINT" id="P06700"/>
<dbReference type="STRING" id="4932.YDL042C"/>
<dbReference type="BindingDB" id="P06700"/>
<dbReference type="ChEMBL" id="CHEMBL3275"/>
<dbReference type="iPTMnet" id="P06700"/>
<dbReference type="PaxDb" id="4932-YDL042C"/>
<dbReference type="PeptideAtlas" id="P06700"/>
<dbReference type="EnsemblFungi" id="YDL042C_mRNA">
    <property type="protein sequence ID" value="YDL042C"/>
    <property type="gene ID" value="YDL042C"/>
</dbReference>
<dbReference type="GeneID" id="851520"/>
<dbReference type="KEGG" id="sce:YDL042C"/>
<dbReference type="AGR" id="SGD:S000002200"/>
<dbReference type="SGD" id="S000002200">
    <property type="gene designation" value="SIR2"/>
</dbReference>
<dbReference type="VEuPathDB" id="FungiDB:YDL042C"/>
<dbReference type="eggNOG" id="KOG2684">
    <property type="taxonomic scope" value="Eukaryota"/>
</dbReference>
<dbReference type="GeneTree" id="ENSGT00940000159406"/>
<dbReference type="HOGENOM" id="CLU_023643_5_0_1"/>
<dbReference type="InParanoid" id="P06700"/>
<dbReference type="OMA" id="MFLKYYG"/>
<dbReference type="OrthoDB" id="420264at2759"/>
<dbReference type="BioCyc" id="MetaCyc:MONOMER3O-4152"/>
<dbReference type="BioCyc" id="YEAST:MONOMER3O-4152"/>
<dbReference type="Reactome" id="R-SCE-427359">
    <property type="pathway name" value="SIRT1 negatively regulates rRNA expression"/>
</dbReference>
<dbReference type="SABIO-RK" id="P06700"/>
<dbReference type="BioGRID-ORCS" id="851520">
    <property type="hits" value="10 hits in 10 CRISPR screens"/>
</dbReference>
<dbReference type="EvolutionaryTrace" id="P06700"/>
<dbReference type="PRO" id="PR:P06700"/>
<dbReference type="Proteomes" id="UP000002311">
    <property type="component" value="Chromosome IV"/>
</dbReference>
<dbReference type="RNAct" id="P06700">
    <property type="molecule type" value="protein"/>
</dbReference>
<dbReference type="GO" id="GO:0005677">
    <property type="term" value="C:chromatin silencing complex"/>
    <property type="evidence" value="ECO:0000314"/>
    <property type="project" value="SGD"/>
</dbReference>
<dbReference type="GO" id="GO:0000781">
    <property type="term" value="C:chromosome, telomeric region"/>
    <property type="evidence" value="ECO:0000314"/>
    <property type="project" value="SGD"/>
</dbReference>
<dbReference type="GO" id="GO:0000792">
    <property type="term" value="C:heterochromatin"/>
    <property type="evidence" value="ECO:0000314"/>
    <property type="project" value="SGD"/>
</dbReference>
<dbReference type="GO" id="GO:0005730">
    <property type="term" value="C:nucleolus"/>
    <property type="evidence" value="ECO:0000314"/>
    <property type="project" value="SGD"/>
</dbReference>
<dbReference type="GO" id="GO:0005634">
    <property type="term" value="C:nucleus"/>
    <property type="evidence" value="ECO:0000318"/>
    <property type="project" value="GO_Central"/>
</dbReference>
<dbReference type="GO" id="GO:0030869">
    <property type="term" value="C:RENT complex"/>
    <property type="evidence" value="ECO:0000314"/>
    <property type="project" value="SGD"/>
</dbReference>
<dbReference type="GO" id="GO:0003688">
    <property type="term" value="F:DNA replication origin binding"/>
    <property type="evidence" value="ECO:0000314"/>
    <property type="project" value="SGD"/>
</dbReference>
<dbReference type="GO" id="GO:0017136">
    <property type="term" value="F:histone deacetylase activity, NAD-dependent"/>
    <property type="evidence" value="ECO:0000314"/>
    <property type="project" value="SGD"/>
</dbReference>
<dbReference type="GO" id="GO:0032041">
    <property type="term" value="F:histone H3K14 deacetylase activity, NAD-dependent"/>
    <property type="evidence" value="ECO:0000314"/>
    <property type="project" value="SGD"/>
</dbReference>
<dbReference type="GO" id="GO:0046969">
    <property type="term" value="F:histone H3K9 deacetylase activity, NAD-dependent"/>
    <property type="evidence" value="ECO:0000314"/>
    <property type="project" value="SGD"/>
</dbReference>
<dbReference type="GO" id="GO:0046970">
    <property type="term" value="F:histone H4K16 deacetylase activity, NAD-dependent"/>
    <property type="evidence" value="ECO:0000314"/>
    <property type="project" value="SGD"/>
</dbReference>
<dbReference type="GO" id="GO:0046872">
    <property type="term" value="F:metal ion binding"/>
    <property type="evidence" value="ECO:0007669"/>
    <property type="project" value="UniProtKB-KW"/>
</dbReference>
<dbReference type="GO" id="GO:0070403">
    <property type="term" value="F:NAD+ binding"/>
    <property type="evidence" value="ECO:0000318"/>
    <property type="project" value="GO_Central"/>
</dbReference>
<dbReference type="GO" id="GO:0006325">
    <property type="term" value="P:chromatin organization"/>
    <property type="evidence" value="ECO:0000314"/>
    <property type="project" value="SGD"/>
</dbReference>
<dbReference type="GO" id="GO:0006303">
    <property type="term" value="P:double-strand break repair via nonhomologous end joining"/>
    <property type="evidence" value="ECO:0000315"/>
    <property type="project" value="SGD"/>
</dbReference>
<dbReference type="GO" id="GO:0097695">
    <property type="term" value="P:establishment of protein-containing complex localization to telomere"/>
    <property type="evidence" value="ECO:0000315"/>
    <property type="project" value="SGD"/>
</dbReference>
<dbReference type="GO" id="GO:0031507">
    <property type="term" value="P:heterochromatin formation"/>
    <property type="evidence" value="ECO:0000318"/>
    <property type="project" value="GO_Central"/>
</dbReference>
<dbReference type="GO" id="GO:1904524">
    <property type="term" value="P:negative regulation of DNA amplification"/>
    <property type="evidence" value="ECO:0000315"/>
    <property type="project" value="SGD"/>
</dbReference>
<dbReference type="GO" id="GO:0045910">
    <property type="term" value="P:negative regulation of DNA recombination"/>
    <property type="evidence" value="ECO:0000315"/>
    <property type="project" value="SGD"/>
</dbReference>
<dbReference type="GO" id="GO:0008156">
    <property type="term" value="P:negative regulation of DNA replication"/>
    <property type="evidence" value="ECO:0000315"/>
    <property type="project" value="SGD"/>
</dbReference>
<dbReference type="GO" id="GO:0000183">
    <property type="term" value="P:rDNA heterochromatin formation"/>
    <property type="evidence" value="ECO:0000315"/>
    <property type="project" value="SGD"/>
</dbReference>
<dbReference type="GO" id="GO:0097752">
    <property type="term" value="P:regulation of DNA stability"/>
    <property type="evidence" value="ECO:0000315"/>
    <property type="project" value="SGD"/>
</dbReference>
<dbReference type="GO" id="GO:0031494">
    <property type="term" value="P:regulation of mating type switching"/>
    <property type="evidence" value="ECO:0000315"/>
    <property type="project" value="SGD"/>
</dbReference>
<dbReference type="GO" id="GO:0031047">
    <property type="term" value="P:regulatory ncRNA-mediated gene silencing"/>
    <property type="evidence" value="ECO:0000315"/>
    <property type="project" value="CACAO"/>
</dbReference>
<dbReference type="GO" id="GO:0030466">
    <property type="term" value="P:silent mating-type cassette heterochromatin formation"/>
    <property type="evidence" value="ECO:0000315"/>
    <property type="project" value="SGD"/>
</dbReference>
<dbReference type="GO" id="GO:0007062">
    <property type="term" value="P:sister chromatid cohesion"/>
    <property type="evidence" value="ECO:0000315"/>
    <property type="project" value="SGD"/>
</dbReference>
<dbReference type="GO" id="GO:0031509">
    <property type="term" value="P:subtelomeric heterochromatin formation"/>
    <property type="evidence" value="ECO:0000315"/>
    <property type="project" value="SGD"/>
</dbReference>
<dbReference type="GO" id="GO:0034398">
    <property type="term" value="P:telomere tethering at nuclear periphery"/>
    <property type="evidence" value="ECO:0000315"/>
    <property type="project" value="SGD"/>
</dbReference>
<dbReference type="CDD" id="cd01408">
    <property type="entry name" value="SIRT1"/>
    <property type="match status" value="1"/>
</dbReference>
<dbReference type="FunFam" id="1.20.120.1710:FF:000001">
    <property type="entry name" value="NAD-dependent histone deacetylase SIR2"/>
    <property type="match status" value="1"/>
</dbReference>
<dbReference type="Gene3D" id="1.20.120.1710">
    <property type="match status" value="1"/>
</dbReference>
<dbReference type="Gene3D" id="3.30.1600.10">
    <property type="entry name" value="SIR2/SIRT2 'Small Domain"/>
    <property type="match status" value="1"/>
</dbReference>
<dbReference type="Gene3D" id="3.40.50.1220">
    <property type="entry name" value="TPP-binding domain"/>
    <property type="match status" value="1"/>
</dbReference>
<dbReference type="InterPro" id="IPR029035">
    <property type="entry name" value="DHS-like_NAD/FAD-binding_dom"/>
</dbReference>
<dbReference type="InterPro" id="IPR007654">
    <property type="entry name" value="NAD-dep_histone_deAcase_SIR2_N"/>
</dbReference>
<dbReference type="InterPro" id="IPR050134">
    <property type="entry name" value="NAD-dep_sirtuin_deacylases"/>
</dbReference>
<dbReference type="InterPro" id="IPR003000">
    <property type="entry name" value="Sirtuin"/>
</dbReference>
<dbReference type="InterPro" id="IPR026591">
    <property type="entry name" value="Sirtuin_cat_small_dom_sf"/>
</dbReference>
<dbReference type="InterPro" id="IPR026590">
    <property type="entry name" value="Ssirtuin_cat_dom"/>
</dbReference>
<dbReference type="PANTHER" id="PTHR11085:SF9">
    <property type="entry name" value="NAD-DEPENDENT PROTEIN DEACETYLASE SIRTUIN-1"/>
    <property type="match status" value="1"/>
</dbReference>
<dbReference type="PANTHER" id="PTHR11085">
    <property type="entry name" value="NAD-DEPENDENT PROTEIN DEACYLASE SIRTUIN-5, MITOCHONDRIAL-RELATED"/>
    <property type="match status" value="1"/>
</dbReference>
<dbReference type="Pfam" id="PF04574">
    <property type="entry name" value="DUF592"/>
    <property type="match status" value="1"/>
</dbReference>
<dbReference type="Pfam" id="PF02146">
    <property type="entry name" value="SIR2"/>
    <property type="match status" value="1"/>
</dbReference>
<dbReference type="SUPFAM" id="SSF52467">
    <property type="entry name" value="DHS-like NAD/FAD-binding domain"/>
    <property type="match status" value="1"/>
</dbReference>
<dbReference type="PROSITE" id="PS50305">
    <property type="entry name" value="SIRTUIN"/>
    <property type="match status" value="1"/>
</dbReference>
<proteinExistence type="evidence at protein level"/>